<feature type="chain" id="PRO_0000406591" description="Nuclear egress protein 1">
    <location>
        <begin position="1"/>
        <end position="300"/>
    </location>
</feature>
<feature type="zinc finger region" description="CCCH-type" evidence="1">
    <location>
        <begin position="90"/>
        <end position="217"/>
    </location>
</feature>
<protein>
    <recommendedName>
        <fullName evidence="1">Nuclear egress protein 1</fullName>
    </recommendedName>
</protein>
<accession>Q9E6N8</accession>
<reference key="1">
    <citation type="journal article" date="2000" name="J. Virol.">
        <title>The genome of a very virulent Marek's disease virus.</title>
        <authorList>
            <person name="Tulman E.R."/>
            <person name="Afonso C.L."/>
            <person name="Lu Z."/>
            <person name="Zsak L."/>
            <person name="Rock D.L."/>
            <person name="Kutish G.F."/>
        </authorList>
    </citation>
    <scope>NUCLEOTIDE SEQUENCE [LARGE SCALE GENOMIC DNA]</scope>
</reference>
<evidence type="ECO:0000255" key="1">
    <source>
        <dbReference type="HAMAP-Rule" id="MF_04023"/>
    </source>
</evidence>
<organism>
    <name type="scientific">Gallid herpesvirus 2 (strain Chicken/Md5/ATCC VR-987)</name>
    <name type="common">GaHV-2</name>
    <name type="synonym">Marek's disease herpesvirus type 1</name>
    <dbReference type="NCBI Taxonomy" id="10389"/>
    <lineage>
        <taxon>Viruses</taxon>
        <taxon>Duplodnaviria</taxon>
        <taxon>Heunggongvirae</taxon>
        <taxon>Peploviricota</taxon>
        <taxon>Herviviricetes</taxon>
        <taxon>Herpesvirales</taxon>
        <taxon>Orthoherpesviridae</taxon>
        <taxon>Alphaherpesvirinae</taxon>
        <taxon>Mardivirus</taxon>
        <taxon>Mardivirus gallidalpha2</taxon>
        <taxon>Gallid alphaherpesvirus 2</taxon>
    </lineage>
</organism>
<dbReference type="EMBL" id="AF243438">
    <property type="protein sequence ID" value="AAG14224.1"/>
    <property type="molecule type" value="Genomic_DNA"/>
</dbReference>
<dbReference type="RefSeq" id="YP_001033960.1">
    <property type="nucleotide sequence ID" value="NC_002229.3"/>
</dbReference>
<dbReference type="SMR" id="Q9E6N8"/>
<dbReference type="GeneID" id="4811505"/>
<dbReference type="KEGG" id="vg:4811505"/>
<dbReference type="Proteomes" id="UP000008072">
    <property type="component" value="Segment"/>
</dbReference>
<dbReference type="GO" id="GO:0044201">
    <property type="term" value="C:host cell nuclear inner membrane"/>
    <property type="evidence" value="ECO:0007669"/>
    <property type="project" value="UniProtKB-SubCell"/>
</dbReference>
<dbReference type="GO" id="GO:0016020">
    <property type="term" value="C:membrane"/>
    <property type="evidence" value="ECO:0007669"/>
    <property type="project" value="UniProtKB-KW"/>
</dbReference>
<dbReference type="GO" id="GO:0008270">
    <property type="term" value="F:zinc ion binding"/>
    <property type="evidence" value="ECO:0007669"/>
    <property type="project" value="UniProtKB-KW"/>
</dbReference>
<dbReference type="GO" id="GO:0046765">
    <property type="term" value="P:viral budding from nuclear membrane"/>
    <property type="evidence" value="ECO:0007669"/>
    <property type="project" value="InterPro"/>
</dbReference>
<dbReference type="HAMAP" id="MF_04023">
    <property type="entry name" value="HSV_NEC1"/>
    <property type="match status" value="1"/>
</dbReference>
<dbReference type="InterPro" id="IPR021152">
    <property type="entry name" value="Herpes_UL31"/>
</dbReference>
<dbReference type="Pfam" id="PF02718">
    <property type="entry name" value="Herpes_UL31"/>
    <property type="match status" value="1"/>
</dbReference>
<sequence>MTGHTLVRRKSIGRDKRLVGRSRRQWRDMNLPSYGNSKGTNMDIYRAYFEFIAESPADELMLVKDLVTPLIKTTSISLPFDMSEAVADNCLSLSGMGYYLGVGGCCPTCVSSGDPRLGRNDRAALILAYVQQINNIYHYRIFLASIIVLGDRLRGDARDKDMESILTRIIAIPELFFAYYVLLDSGIKNVKVLFYLDREAGSSEYMMYIVFPGKALHLHYRLIDCMKSACKSYRIIAHVWRTNFLLVIRKEYDRQTDSCDVPAVNAEDVYCKLCDLNIDGELLLEYGKLYSAFDEFLPPR</sequence>
<comment type="function">
    <text evidence="1">Plays an essential role in virion nuclear egress, the first step of virion release from infected cell. Within the host nucleus, NEC1 interacts with the newly formed capsid through the vertexes and directs it to the inner nuclear membrane by associating with NEC2. Induces the budding of the capsid at the inner nuclear membrane as well as its envelopment into the perinuclear space. There, the NEC1/NEC2 complex promotes the fusion of the enveloped capsid with the outer nuclear membrane and the subsequent release of the viral capsid into the cytoplasm where it will reach the secondary budding sites in the host Golgi or trans-Golgi network.</text>
</comment>
<comment type="subunit">
    <text evidence="1">Forms a heterohexameric complex with NEC2. Interacts with capsid vertex specific component 2/CVC2; this interaction directs the capsid to the host inner nuclear membrane to initiate budding.</text>
</comment>
<comment type="subcellular location">
    <subcellularLocation>
        <location evidence="1">Host nucleus inner membrane</location>
    </subcellularLocation>
    <text evidence="1">Remains attached to the nucleus inner membrane through interaction with NEC2.</text>
</comment>
<comment type="PTM">
    <text evidence="1">Phosphorylated at serine residues in the N-terminus. This phosphorylation regulates the localization within the inner nuclear membrane.</text>
</comment>
<comment type="similarity">
    <text evidence="1">Belongs to the herpesviridae NEC1 protein family.</text>
</comment>
<proteinExistence type="inferred from homology"/>
<name>NEC1_GAHVM</name>
<gene>
    <name evidence="1" type="primary">NEC1</name>
    <name type="ordered locus">MDV044</name>
</gene>
<keyword id="KW-1043">Host membrane</keyword>
<keyword id="KW-1048">Host nucleus</keyword>
<keyword id="KW-0472">Membrane</keyword>
<keyword id="KW-0479">Metal-binding</keyword>
<keyword id="KW-0597">Phosphoprotein</keyword>
<keyword id="KW-1185">Reference proteome</keyword>
<keyword id="KW-0862">Zinc</keyword>
<keyword id="KW-0863">Zinc-finger</keyword>
<organismHost>
    <name type="scientific">Gallus gallus</name>
    <name type="common">Chicken</name>
    <dbReference type="NCBI Taxonomy" id="9031"/>
</organismHost>